<reference key="1">
    <citation type="submission" date="2009-05" db="EMBL/GenBank/DDBJ databases">
        <title>Complete sequence of Tolumonas auensis DSM 9187.</title>
        <authorList>
            <consortium name="US DOE Joint Genome Institute"/>
            <person name="Lucas S."/>
            <person name="Copeland A."/>
            <person name="Lapidus A."/>
            <person name="Glavina del Rio T."/>
            <person name="Tice H."/>
            <person name="Bruce D."/>
            <person name="Goodwin L."/>
            <person name="Pitluck S."/>
            <person name="Chertkov O."/>
            <person name="Brettin T."/>
            <person name="Detter J.C."/>
            <person name="Han C."/>
            <person name="Larimer F."/>
            <person name="Land M."/>
            <person name="Hauser L."/>
            <person name="Kyrpides N."/>
            <person name="Mikhailova N."/>
            <person name="Spring S."/>
            <person name="Beller H."/>
        </authorList>
    </citation>
    <scope>NUCLEOTIDE SEQUENCE [LARGE SCALE GENOMIC DNA]</scope>
    <source>
        <strain>DSM 9187 / NBRC 110442 / TA 4</strain>
    </source>
</reference>
<dbReference type="EC" id="6.1.1.14" evidence="1"/>
<dbReference type="EMBL" id="CP001616">
    <property type="protein sequence ID" value="ACQ91639.1"/>
    <property type="molecule type" value="Genomic_DNA"/>
</dbReference>
<dbReference type="RefSeq" id="WP_012728239.1">
    <property type="nucleotide sequence ID" value="NC_012691.1"/>
</dbReference>
<dbReference type="SMR" id="C4L763"/>
<dbReference type="STRING" id="595494.Tola_0009"/>
<dbReference type="KEGG" id="tau:Tola_0009"/>
<dbReference type="eggNOG" id="COG0752">
    <property type="taxonomic scope" value="Bacteria"/>
</dbReference>
<dbReference type="HOGENOM" id="CLU_057066_1_0_6"/>
<dbReference type="OrthoDB" id="9802183at2"/>
<dbReference type="Proteomes" id="UP000009073">
    <property type="component" value="Chromosome"/>
</dbReference>
<dbReference type="GO" id="GO:0005829">
    <property type="term" value="C:cytosol"/>
    <property type="evidence" value="ECO:0007669"/>
    <property type="project" value="TreeGrafter"/>
</dbReference>
<dbReference type="GO" id="GO:0005524">
    <property type="term" value="F:ATP binding"/>
    <property type="evidence" value="ECO:0007669"/>
    <property type="project" value="UniProtKB-UniRule"/>
</dbReference>
<dbReference type="GO" id="GO:0004820">
    <property type="term" value="F:glycine-tRNA ligase activity"/>
    <property type="evidence" value="ECO:0007669"/>
    <property type="project" value="UniProtKB-UniRule"/>
</dbReference>
<dbReference type="GO" id="GO:0006426">
    <property type="term" value="P:glycyl-tRNA aminoacylation"/>
    <property type="evidence" value="ECO:0007669"/>
    <property type="project" value="UniProtKB-UniRule"/>
</dbReference>
<dbReference type="CDD" id="cd00733">
    <property type="entry name" value="GlyRS_alpha_core"/>
    <property type="match status" value="1"/>
</dbReference>
<dbReference type="FunFam" id="3.30.930.10:FF:000006">
    <property type="entry name" value="Glycine--tRNA ligase alpha subunit"/>
    <property type="match status" value="1"/>
</dbReference>
<dbReference type="Gene3D" id="3.30.930.10">
    <property type="entry name" value="Bira Bifunctional Protein, Domain 2"/>
    <property type="match status" value="1"/>
</dbReference>
<dbReference type="Gene3D" id="1.20.58.180">
    <property type="entry name" value="Class II aaRS and biotin synthetases, domain 2"/>
    <property type="match status" value="1"/>
</dbReference>
<dbReference type="HAMAP" id="MF_00254">
    <property type="entry name" value="Gly_tRNA_synth_alpha"/>
    <property type="match status" value="1"/>
</dbReference>
<dbReference type="InterPro" id="IPR045864">
    <property type="entry name" value="aa-tRNA-synth_II/BPL/LPL"/>
</dbReference>
<dbReference type="InterPro" id="IPR006194">
    <property type="entry name" value="Gly-tRNA-synth_heterodimer"/>
</dbReference>
<dbReference type="InterPro" id="IPR002310">
    <property type="entry name" value="Gly-tRNA_ligase_asu"/>
</dbReference>
<dbReference type="NCBIfam" id="TIGR00388">
    <property type="entry name" value="glyQ"/>
    <property type="match status" value="1"/>
</dbReference>
<dbReference type="NCBIfam" id="NF006827">
    <property type="entry name" value="PRK09348.1"/>
    <property type="match status" value="1"/>
</dbReference>
<dbReference type="PANTHER" id="PTHR30075:SF2">
    <property type="entry name" value="GLYCINE--TRNA LIGASE, CHLOROPLASTIC_MITOCHONDRIAL 2"/>
    <property type="match status" value="1"/>
</dbReference>
<dbReference type="PANTHER" id="PTHR30075">
    <property type="entry name" value="GLYCYL-TRNA SYNTHETASE"/>
    <property type="match status" value="1"/>
</dbReference>
<dbReference type="Pfam" id="PF02091">
    <property type="entry name" value="tRNA-synt_2e"/>
    <property type="match status" value="1"/>
</dbReference>
<dbReference type="PRINTS" id="PR01044">
    <property type="entry name" value="TRNASYNTHGA"/>
</dbReference>
<dbReference type="SUPFAM" id="SSF55681">
    <property type="entry name" value="Class II aaRS and biotin synthetases"/>
    <property type="match status" value="1"/>
</dbReference>
<dbReference type="PROSITE" id="PS50861">
    <property type="entry name" value="AA_TRNA_LIGASE_II_GLYAB"/>
    <property type="match status" value="1"/>
</dbReference>
<accession>C4L763</accession>
<keyword id="KW-0030">Aminoacyl-tRNA synthetase</keyword>
<keyword id="KW-0067">ATP-binding</keyword>
<keyword id="KW-0963">Cytoplasm</keyword>
<keyword id="KW-0436">Ligase</keyword>
<keyword id="KW-0547">Nucleotide-binding</keyword>
<keyword id="KW-0648">Protein biosynthesis</keyword>
<keyword id="KW-1185">Reference proteome</keyword>
<sequence>MQKFDIKTFQGLILSLQDYWARQGCVISQPLDMEVGAGTSHPMTFLRSIGPEPMNCAYVQPSRRPTDGRYGENPNRLQHYYQFQVILKPSPDNIQELYLGSLRELGFDPLVHDIRFVEDNWENPTLGAWGLGWEVWLNGMEVTQFTYFQQVGGLECFPVTGEITYGLERLAMYIQGVDSLYDLVWADGPLGKVTYRDVFHQNEVEQSTYNFEHADVPFLFQLFDQCEKECQHLLNLELPLPLPAYERILKAAHAFNLLDARHAISVTERQRYILRIRTLSKAVAEAYYAARERLGFPMCKATQA</sequence>
<feature type="chain" id="PRO_1000204597" description="Glycine--tRNA ligase alpha subunit">
    <location>
        <begin position="1"/>
        <end position="304"/>
    </location>
</feature>
<evidence type="ECO:0000255" key="1">
    <source>
        <dbReference type="HAMAP-Rule" id="MF_00254"/>
    </source>
</evidence>
<proteinExistence type="inferred from homology"/>
<name>SYGA_TOLAT</name>
<organism>
    <name type="scientific">Tolumonas auensis (strain DSM 9187 / NBRC 110442 / TA 4)</name>
    <dbReference type="NCBI Taxonomy" id="595494"/>
    <lineage>
        <taxon>Bacteria</taxon>
        <taxon>Pseudomonadati</taxon>
        <taxon>Pseudomonadota</taxon>
        <taxon>Gammaproteobacteria</taxon>
        <taxon>Aeromonadales</taxon>
        <taxon>Aeromonadaceae</taxon>
        <taxon>Tolumonas</taxon>
    </lineage>
</organism>
<protein>
    <recommendedName>
        <fullName evidence="1">Glycine--tRNA ligase alpha subunit</fullName>
        <ecNumber evidence="1">6.1.1.14</ecNumber>
    </recommendedName>
    <alternativeName>
        <fullName evidence="1">Glycyl-tRNA synthetase alpha subunit</fullName>
        <shortName evidence="1">GlyRS</shortName>
    </alternativeName>
</protein>
<comment type="catalytic activity">
    <reaction evidence="1">
        <text>tRNA(Gly) + glycine + ATP = glycyl-tRNA(Gly) + AMP + diphosphate</text>
        <dbReference type="Rhea" id="RHEA:16013"/>
        <dbReference type="Rhea" id="RHEA-COMP:9664"/>
        <dbReference type="Rhea" id="RHEA-COMP:9683"/>
        <dbReference type="ChEBI" id="CHEBI:30616"/>
        <dbReference type="ChEBI" id="CHEBI:33019"/>
        <dbReference type="ChEBI" id="CHEBI:57305"/>
        <dbReference type="ChEBI" id="CHEBI:78442"/>
        <dbReference type="ChEBI" id="CHEBI:78522"/>
        <dbReference type="ChEBI" id="CHEBI:456215"/>
        <dbReference type="EC" id="6.1.1.14"/>
    </reaction>
</comment>
<comment type="subunit">
    <text evidence="1">Tetramer of two alpha and two beta subunits.</text>
</comment>
<comment type="subcellular location">
    <subcellularLocation>
        <location evidence="1">Cytoplasm</location>
    </subcellularLocation>
</comment>
<comment type="similarity">
    <text evidence="1">Belongs to the class-II aminoacyl-tRNA synthetase family.</text>
</comment>
<gene>
    <name evidence="1" type="primary">glyQ</name>
    <name type="ordered locus">Tola_0009</name>
</gene>